<protein>
    <recommendedName>
        <fullName evidence="1">Glutamate 5-kinase</fullName>
        <ecNumber evidence="1">2.7.2.11</ecNumber>
    </recommendedName>
    <alternativeName>
        <fullName evidence="1">Gamma-glutamyl kinase</fullName>
        <shortName evidence="1">GK</shortName>
    </alternativeName>
</protein>
<keyword id="KW-0028">Amino-acid biosynthesis</keyword>
<keyword id="KW-0067">ATP-binding</keyword>
<keyword id="KW-0963">Cytoplasm</keyword>
<keyword id="KW-0418">Kinase</keyword>
<keyword id="KW-0547">Nucleotide-binding</keyword>
<keyword id="KW-0641">Proline biosynthesis</keyword>
<keyword id="KW-0808">Transferase</keyword>
<proteinExistence type="inferred from homology"/>
<feature type="chain" id="PRO_1000125221" description="Glutamate 5-kinase">
    <location>
        <begin position="1"/>
        <end position="372"/>
    </location>
</feature>
<feature type="domain" description="PUA" evidence="1">
    <location>
        <begin position="280"/>
        <end position="358"/>
    </location>
</feature>
<feature type="binding site" evidence="1">
    <location>
        <position position="14"/>
    </location>
    <ligand>
        <name>ATP</name>
        <dbReference type="ChEBI" id="CHEBI:30616"/>
    </ligand>
</feature>
<feature type="binding site" evidence="1">
    <location>
        <position position="54"/>
    </location>
    <ligand>
        <name>substrate</name>
    </ligand>
</feature>
<feature type="binding site" evidence="1">
    <location>
        <position position="141"/>
    </location>
    <ligand>
        <name>substrate</name>
    </ligand>
</feature>
<feature type="binding site" evidence="1">
    <location>
        <position position="153"/>
    </location>
    <ligand>
        <name>substrate</name>
    </ligand>
</feature>
<feature type="binding site" evidence="1">
    <location>
        <begin position="173"/>
        <end position="174"/>
    </location>
    <ligand>
        <name>ATP</name>
        <dbReference type="ChEBI" id="CHEBI:30616"/>
    </ligand>
</feature>
<organism>
    <name type="scientific">Paraburkholderia phytofirmans (strain DSM 17436 / LMG 22146 / PsJN)</name>
    <name type="common">Burkholderia phytofirmans</name>
    <dbReference type="NCBI Taxonomy" id="398527"/>
    <lineage>
        <taxon>Bacteria</taxon>
        <taxon>Pseudomonadati</taxon>
        <taxon>Pseudomonadota</taxon>
        <taxon>Betaproteobacteria</taxon>
        <taxon>Burkholderiales</taxon>
        <taxon>Burkholderiaceae</taxon>
        <taxon>Paraburkholderia</taxon>
    </lineage>
</organism>
<comment type="function">
    <text evidence="1">Catalyzes the transfer of a phosphate group to glutamate to form L-glutamate 5-phosphate.</text>
</comment>
<comment type="catalytic activity">
    <reaction evidence="1">
        <text>L-glutamate + ATP = L-glutamyl 5-phosphate + ADP</text>
        <dbReference type="Rhea" id="RHEA:14877"/>
        <dbReference type="ChEBI" id="CHEBI:29985"/>
        <dbReference type="ChEBI" id="CHEBI:30616"/>
        <dbReference type="ChEBI" id="CHEBI:58274"/>
        <dbReference type="ChEBI" id="CHEBI:456216"/>
        <dbReference type="EC" id="2.7.2.11"/>
    </reaction>
</comment>
<comment type="pathway">
    <text evidence="1">Amino-acid biosynthesis; L-proline biosynthesis; L-glutamate 5-semialdehyde from L-glutamate: step 1/2.</text>
</comment>
<comment type="subcellular location">
    <subcellularLocation>
        <location evidence="1">Cytoplasm</location>
    </subcellularLocation>
</comment>
<comment type="similarity">
    <text evidence="1">Belongs to the glutamate 5-kinase family.</text>
</comment>
<gene>
    <name evidence="1" type="primary">proB</name>
    <name type="ordered locus">Bphyt_3446</name>
</gene>
<dbReference type="EC" id="2.7.2.11" evidence="1"/>
<dbReference type="EMBL" id="CP001052">
    <property type="protein sequence ID" value="ACD17836.1"/>
    <property type="molecule type" value="Genomic_DNA"/>
</dbReference>
<dbReference type="RefSeq" id="WP_012434399.1">
    <property type="nucleotide sequence ID" value="NC_010681.1"/>
</dbReference>
<dbReference type="SMR" id="B2SYV1"/>
<dbReference type="STRING" id="398527.Bphyt_3446"/>
<dbReference type="KEGG" id="bpy:Bphyt_3446"/>
<dbReference type="eggNOG" id="COG0263">
    <property type="taxonomic scope" value="Bacteria"/>
</dbReference>
<dbReference type="HOGENOM" id="CLU_025400_2_0_4"/>
<dbReference type="OrthoDB" id="9804434at2"/>
<dbReference type="UniPathway" id="UPA00098">
    <property type="reaction ID" value="UER00359"/>
</dbReference>
<dbReference type="Proteomes" id="UP000001739">
    <property type="component" value="Chromosome 1"/>
</dbReference>
<dbReference type="GO" id="GO:0005829">
    <property type="term" value="C:cytosol"/>
    <property type="evidence" value="ECO:0007669"/>
    <property type="project" value="TreeGrafter"/>
</dbReference>
<dbReference type="GO" id="GO:0005524">
    <property type="term" value="F:ATP binding"/>
    <property type="evidence" value="ECO:0007669"/>
    <property type="project" value="UniProtKB-KW"/>
</dbReference>
<dbReference type="GO" id="GO:0004349">
    <property type="term" value="F:glutamate 5-kinase activity"/>
    <property type="evidence" value="ECO:0007669"/>
    <property type="project" value="UniProtKB-UniRule"/>
</dbReference>
<dbReference type="GO" id="GO:0003723">
    <property type="term" value="F:RNA binding"/>
    <property type="evidence" value="ECO:0007669"/>
    <property type="project" value="InterPro"/>
</dbReference>
<dbReference type="GO" id="GO:0055129">
    <property type="term" value="P:L-proline biosynthetic process"/>
    <property type="evidence" value="ECO:0007669"/>
    <property type="project" value="UniProtKB-UniRule"/>
</dbReference>
<dbReference type="CDD" id="cd04242">
    <property type="entry name" value="AAK_G5K_ProB"/>
    <property type="match status" value="1"/>
</dbReference>
<dbReference type="CDD" id="cd21157">
    <property type="entry name" value="PUA_G5K"/>
    <property type="match status" value="1"/>
</dbReference>
<dbReference type="FunFam" id="2.30.130.10:FF:000007">
    <property type="entry name" value="Glutamate 5-kinase"/>
    <property type="match status" value="1"/>
</dbReference>
<dbReference type="FunFam" id="3.40.1160.10:FF:000018">
    <property type="entry name" value="Glutamate 5-kinase"/>
    <property type="match status" value="1"/>
</dbReference>
<dbReference type="Gene3D" id="3.40.1160.10">
    <property type="entry name" value="Acetylglutamate kinase-like"/>
    <property type="match status" value="2"/>
</dbReference>
<dbReference type="Gene3D" id="2.30.130.10">
    <property type="entry name" value="PUA domain"/>
    <property type="match status" value="1"/>
</dbReference>
<dbReference type="HAMAP" id="MF_00456">
    <property type="entry name" value="ProB"/>
    <property type="match status" value="1"/>
</dbReference>
<dbReference type="InterPro" id="IPR036393">
    <property type="entry name" value="AceGlu_kinase-like_sf"/>
</dbReference>
<dbReference type="InterPro" id="IPR001048">
    <property type="entry name" value="Asp/Glu/Uridylate_kinase"/>
</dbReference>
<dbReference type="InterPro" id="IPR041739">
    <property type="entry name" value="G5K_ProB"/>
</dbReference>
<dbReference type="InterPro" id="IPR001057">
    <property type="entry name" value="Glu/AcGlu_kinase"/>
</dbReference>
<dbReference type="InterPro" id="IPR011529">
    <property type="entry name" value="Glu_5kinase"/>
</dbReference>
<dbReference type="InterPro" id="IPR005715">
    <property type="entry name" value="Glu_5kinase/COase_Synthase"/>
</dbReference>
<dbReference type="InterPro" id="IPR019797">
    <property type="entry name" value="Glutamate_5-kinase_CS"/>
</dbReference>
<dbReference type="InterPro" id="IPR002478">
    <property type="entry name" value="PUA"/>
</dbReference>
<dbReference type="InterPro" id="IPR015947">
    <property type="entry name" value="PUA-like_sf"/>
</dbReference>
<dbReference type="InterPro" id="IPR036974">
    <property type="entry name" value="PUA_sf"/>
</dbReference>
<dbReference type="NCBIfam" id="TIGR01027">
    <property type="entry name" value="proB"/>
    <property type="match status" value="1"/>
</dbReference>
<dbReference type="PANTHER" id="PTHR43654">
    <property type="entry name" value="GLUTAMATE 5-KINASE"/>
    <property type="match status" value="1"/>
</dbReference>
<dbReference type="PANTHER" id="PTHR43654:SF1">
    <property type="entry name" value="ISOPENTENYL PHOSPHATE KINASE"/>
    <property type="match status" value="1"/>
</dbReference>
<dbReference type="Pfam" id="PF00696">
    <property type="entry name" value="AA_kinase"/>
    <property type="match status" value="1"/>
</dbReference>
<dbReference type="Pfam" id="PF01472">
    <property type="entry name" value="PUA"/>
    <property type="match status" value="1"/>
</dbReference>
<dbReference type="PIRSF" id="PIRSF000729">
    <property type="entry name" value="GK"/>
    <property type="match status" value="1"/>
</dbReference>
<dbReference type="PRINTS" id="PR00474">
    <property type="entry name" value="GLU5KINASE"/>
</dbReference>
<dbReference type="SMART" id="SM00359">
    <property type="entry name" value="PUA"/>
    <property type="match status" value="1"/>
</dbReference>
<dbReference type="SUPFAM" id="SSF53633">
    <property type="entry name" value="Carbamate kinase-like"/>
    <property type="match status" value="1"/>
</dbReference>
<dbReference type="SUPFAM" id="SSF88697">
    <property type="entry name" value="PUA domain-like"/>
    <property type="match status" value="1"/>
</dbReference>
<dbReference type="PROSITE" id="PS00902">
    <property type="entry name" value="GLUTAMATE_5_KINASE"/>
    <property type="match status" value="1"/>
</dbReference>
<dbReference type="PROSITE" id="PS50890">
    <property type="entry name" value="PUA"/>
    <property type="match status" value="1"/>
</dbReference>
<sequence length="372" mass="39384">MRSVIADSRRLVVKVGSSLVTNDGRGLDHAAIGRWAAQIAALRAQGKEVVLVSSGAIAEGMQRLGWTKRPREIDELQAAAAVGQMGLAQVYESRFAEHSIQTAQILLTHADLADRERYLNARSTLLTLLRLGVVPIINENDTVVTDEIKFGDNDTLGALVANLIEGDALVILTDQQGLFTADPRKDLTATLVQQADAGALELEAMAGGAGSSLGRGGMLTKILAAKRAAHSGANTVIASGREADVLSRLASGEAIGTQLIARTARMAARKQWMADHLQVRGHVVIDDGAVEKLTEGGKSLLPIGIVGVQGAFARGEVIACLSAAGREVARGLTNYSSAETKLIQRRPSGEIESVLGYMLEPELIHRDNLVLV</sequence>
<reference key="1">
    <citation type="journal article" date="2011" name="J. Bacteriol.">
        <title>Complete genome sequence of the plant growth-promoting endophyte Burkholderia phytofirmans strain PsJN.</title>
        <authorList>
            <person name="Weilharter A."/>
            <person name="Mitter B."/>
            <person name="Shin M.V."/>
            <person name="Chain P.S."/>
            <person name="Nowak J."/>
            <person name="Sessitsch A."/>
        </authorList>
    </citation>
    <scope>NUCLEOTIDE SEQUENCE [LARGE SCALE GENOMIC DNA]</scope>
    <source>
        <strain>DSM 17436 / LMG 22146 / PsJN</strain>
    </source>
</reference>
<name>PROB_PARPJ</name>
<accession>B2SYV1</accession>
<evidence type="ECO:0000255" key="1">
    <source>
        <dbReference type="HAMAP-Rule" id="MF_00456"/>
    </source>
</evidence>